<accession>Q5E9K1</accession>
<proteinExistence type="evidence at transcript level"/>
<protein>
    <recommendedName>
        <fullName>COMM domain-containing protein 5</fullName>
    </recommendedName>
</protein>
<gene>
    <name type="primary">COMMD5</name>
</gene>
<sequence length="224" mass="24502">MSAVGPAAAHLHRPGDSHSDCVSFLGAQLPPEVAAMPQLLGDLDRATFRKLLKLVVSSLQGEDCREAVQHLRAGANLPEEQLGALIAGTHTLLQQALRLPPASLKPDTFKNQLQELCIPQDLVVDLASVVFGSQRPLLDSVARQQGAWLPHIADFRWRVDVAISTSALARSLQPSVLMHLKLSDGSALRFEVPTAKFQELRFAVALVLKEMADLEKRCERKLQD</sequence>
<feature type="initiator methionine" description="Removed" evidence="2">
    <location>
        <position position="1"/>
    </location>
</feature>
<feature type="chain" id="PRO_0000239238" description="COMM domain-containing protein 5">
    <location>
        <begin position="2"/>
        <end position="224"/>
    </location>
</feature>
<feature type="domain" description="COMM" evidence="3">
    <location>
        <begin position="151"/>
        <end position="215"/>
    </location>
</feature>
<feature type="modified residue" description="N-acetylserine" evidence="2">
    <location>
        <position position="2"/>
    </location>
</feature>
<dbReference type="EMBL" id="BT020919">
    <property type="protein sequence ID" value="AAX08936.1"/>
    <property type="molecule type" value="mRNA"/>
</dbReference>
<dbReference type="RefSeq" id="NP_001014850.1">
    <property type="nucleotide sequence ID" value="NM_001014850.1"/>
</dbReference>
<dbReference type="RefSeq" id="XP_005215206.1">
    <property type="nucleotide sequence ID" value="XM_005215149.5"/>
</dbReference>
<dbReference type="RefSeq" id="XP_010810125.1">
    <property type="nucleotide sequence ID" value="XM_010811823.2"/>
</dbReference>
<dbReference type="RefSeq" id="XP_010810126.1">
    <property type="nucleotide sequence ID" value="XM_010811824.2"/>
</dbReference>
<dbReference type="RefSeq" id="XP_015329817.1">
    <property type="nucleotide sequence ID" value="XM_015474331.3"/>
</dbReference>
<dbReference type="RefSeq" id="XP_059749132.1">
    <property type="nucleotide sequence ID" value="XM_059893149.1"/>
</dbReference>
<dbReference type="SMR" id="Q5E9K1"/>
<dbReference type="FunCoup" id="Q5E9K1">
    <property type="interactions" value="1285"/>
</dbReference>
<dbReference type="STRING" id="9913.ENSBTAP00000024561"/>
<dbReference type="PaxDb" id="9913-ENSBTAP00000024561"/>
<dbReference type="Ensembl" id="ENSBTAT00000024561.3">
    <property type="protein sequence ID" value="ENSBTAP00000024561.1"/>
    <property type="gene ID" value="ENSBTAG00000018455.6"/>
</dbReference>
<dbReference type="Ensembl" id="ENSBTAT00000094718.1">
    <property type="protein sequence ID" value="ENSBTAP00000089273.1"/>
    <property type="gene ID" value="ENSBTAG00000018455.6"/>
</dbReference>
<dbReference type="Ensembl" id="ENSBTAT00000104429.1">
    <property type="protein sequence ID" value="ENSBTAP00000090308.1"/>
    <property type="gene ID" value="ENSBTAG00000018455.6"/>
</dbReference>
<dbReference type="GeneID" id="504807"/>
<dbReference type="KEGG" id="bta:504807"/>
<dbReference type="CTD" id="28991"/>
<dbReference type="VEuPathDB" id="HostDB:ENSBTAG00000018455"/>
<dbReference type="VGNC" id="VGNC:27586">
    <property type="gene designation" value="COMMD5"/>
</dbReference>
<dbReference type="eggNOG" id="ENOG502RCJ6">
    <property type="taxonomic scope" value="Eukaryota"/>
</dbReference>
<dbReference type="GeneTree" id="ENSGT00390000013770"/>
<dbReference type="HOGENOM" id="CLU_091901_0_0_1"/>
<dbReference type="InParanoid" id="Q5E9K1"/>
<dbReference type="OMA" id="IQRTKFN"/>
<dbReference type="OrthoDB" id="203754at2759"/>
<dbReference type="TreeFam" id="TF323880"/>
<dbReference type="Reactome" id="R-BTA-8951664">
    <property type="pathway name" value="Neddylation"/>
</dbReference>
<dbReference type="Proteomes" id="UP000009136">
    <property type="component" value="Chromosome 14"/>
</dbReference>
<dbReference type="Bgee" id="ENSBTAG00000018455">
    <property type="expression patterns" value="Expressed in retina and 109 other cell types or tissues"/>
</dbReference>
<dbReference type="GO" id="GO:0005737">
    <property type="term" value="C:cytoplasm"/>
    <property type="evidence" value="ECO:0007669"/>
    <property type="project" value="UniProtKB-SubCell"/>
</dbReference>
<dbReference type="GO" id="GO:0005634">
    <property type="term" value="C:nucleus"/>
    <property type="evidence" value="ECO:0000318"/>
    <property type="project" value="GO_Central"/>
</dbReference>
<dbReference type="CDD" id="cd04753">
    <property type="entry name" value="Commd5_HCaRG"/>
    <property type="match status" value="1"/>
</dbReference>
<dbReference type="InterPro" id="IPR017920">
    <property type="entry name" value="COMM"/>
</dbReference>
<dbReference type="InterPro" id="IPR037357">
    <property type="entry name" value="COMMD5"/>
</dbReference>
<dbReference type="PANTHER" id="PTHR15666">
    <property type="entry name" value="COMM DOMAIN CONTAINING PROTEIN 5"/>
    <property type="match status" value="1"/>
</dbReference>
<dbReference type="PANTHER" id="PTHR15666:SF1">
    <property type="entry name" value="COMM DOMAIN-CONTAINING PROTEIN 5"/>
    <property type="match status" value="1"/>
</dbReference>
<dbReference type="Pfam" id="PF07258">
    <property type="entry name" value="COMM_domain"/>
    <property type="match status" value="1"/>
</dbReference>
<dbReference type="Pfam" id="PF21672">
    <property type="entry name" value="COMM_HN"/>
    <property type="match status" value="1"/>
</dbReference>
<dbReference type="PROSITE" id="PS51269">
    <property type="entry name" value="COMM"/>
    <property type="match status" value="1"/>
</dbReference>
<reference key="1">
    <citation type="journal article" date="2005" name="BMC Genomics">
        <title>Characterization of 954 bovine full-CDS cDNA sequences.</title>
        <authorList>
            <person name="Harhay G.P."/>
            <person name="Sonstegard T.S."/>
            <person name="Keele J.W."/>
            <person name="Heaton M.P."/>
            <person name="Clawson M.L."/>
            <person name="Snelling W.M."/>
            <person name="Wiedmann R.T."/>
            <person name="Van Tassell C.P."/>
            <person name="Smith T.P.L."/>
        </authorList>
    </citation>
    <scope>NUCLEOTIDE SEQUENCE [LARGE SCALE MRNA]</scope>
</reference>
<keyword id="KW-0007">Acetylation</keyword>
<keyword id="KW-0963">Cytoplasm</keyword>
<keyword id="KW-0539">Nucleus</keyword>
<keyword id="KW-1185">Reference proteome</keyword>
<keyword id="KW-0804">Transcription</keyword>
<keyword id="KW-0805">Transcription regulation</keyword>
<keyword id="KW-0833">Ubl conjugation pathway</keyword>
<comment type="function">
    <text evidence="1 2">Scaffold protein in the commander complex that is essential for endosomal recycling of transmembrane cargos; the commander complex is composed of the CCC subcomplex and the retriever subcomplex (By similarity). May modulate activity of cullin-RING E3 ubiquitin ligase (CRL) complexes (By similarity). Negatively regulates cell proliferation (By similarity). Negatively regulates cell cycle G2/M phase transition probably by transactivating p21/CDKN1A through the p53/TP53-independent signaling pathway (By similarity). Involved in kidney proximal tubule morphogenesis (By similarity). Down-regulates activation of NF-kappa-B (By similarity).</text>
</comment>
<comment type="subunit">
    <text evidence="2">Component of the commander complex consisting of the CCC subcomplex and the retriever subcomplex (By similarity). Component of the CCC (COMMD/CCDC22/CCDC93) subcomplex consisting of COMMD1, COMMD2, COMMD3, COMMD4, COMMD5, COMMD6, COMMD7, COMMD8, COMMD9, COMMD10, CCDC22 and CCDC93; within the complex forms a heterodimer with COMMD10 (By similarity). Interacts (via COMM domain) with COMMD1 (via COMM domain). Interacts with RELA, RELB, NFKB1/p105 (By similarity). Interacts with CCDC22, CCDC93, SCNN1B, CUL2, CUL3, CUL4A, CUL4B, CUL7 (By similarity).</text>
</comment>
<comment type="subcellular location">
    <subcellularLocation>
        <location evidence="2">Nucleus</location>
    </subcellularLocation>
    <subcellularLocation>
        <location evidence="2">Cytoplasm</location>
    </subcellularLocation>
</comment>
<comment type="similarity">
    <text evidence="4">Belongs to the COMM domain-containing protein 5 family.</text>
</comment>
<evidence type="ECO:0000250" key="1">
    <source>
        <dbReference type="UniProtKB" id="Q9ERR2"/>
    </source>
</evidence>
<evidence type="ECO:0000250" key="2">
    <source>
        <dbReference type="UniProtKB" id="Q9GZQ3"/>
    </source>
</evidence>
<evidence type="ECO:0000255" key="3">
    <source>
        <dbReference type="PROSITE-ProRule" id="PRU00602"/>
    </source>
</evidence>
<evidence type="ECO:0000305" key="4"/>
<organism>
    <name type="scientific">Bos taurus</name>
    <name type="common">Bovine</name>
    <dbReference type="NCBI Taxonomy" id="9913"/>
    <lineage>
        <taxon>Eukaryota</taxon>
        <taxon>Metazoa</taxon>
        <taxon>Chordata</taxon>
        <taxon>Craniata</taxon>
        <taxon>Vertebrata</taxon>
        <taxon>Euteleostomi</taxon>
        <taxon>Mammalia</taxon>
        <taxon>Eutheria</taxon>
        <taxon>Laurasiatheria</taxon>
        <taxon>Artiodactyla</taxon>
        <taxon>Ruminantia</taxon>
        <taxon>Pecora</taxon>
        <taxon>Bovidae</taxon>
        <taxon>Bovinae</taxon>
        <taxon>Bos</taxon>
    </lineage>
</organism>
<name>COMD5_BOVIN</name>